<evidence type="ECO:0000255" key="1">
    <source>
        <dbReference type="HAMAP-Rule" id="MF_01152"/>
    </source>
</evidence>
<protein>
    <recommendedName>
        <fullName evidence="1">Chaperone protein DnaJ</fullName>
    </recommendedName>
</protein>
<comment type="function">
    <text evidence="1">Participates actively in the response to hyperosmotic and heat shock by preventing the aggregation of stress-denatured proteins and by disaggregating proteins, also in an autonomous, DnaK-independent fashion. Unfolded proteins bind initially to DnaJ; upon interaction with the DnaJ-bound protein, DnaK hydrolyzes its bound ATP, resulting in the formation of a stable complex. GrpE releases ADP from DnaK; ATP binding to DnaK triggers the release of the substrate protein, thus completing the reaction cycle. Several rounds of ATP-dependent interactions between DnaJ, DnaK and GrpE are required for fully efficient folding. Also involved, together with DnaK and GrpE, in the DNA replication of plasmids through activation of initiation proteins.</text>
</comment>
<comment type="cofactor">
    <cofactor evidence="1">
        <name>Zn(2+)</name>
        <dbReference type="ChEBI" id="CHEBI:29105"/>
    </cofactor>
    <text evidence="1">Binds 2 Zn(2+) ions per monomer.</text>
</comment>
<comment type="subunit">
    <text evidence="1">Homodimer.</text>
</comment>
<comment type="subcellular location">
    <subcellularLocation>
        <location evidence="1">Cytoplasm</location>
    </subcellularLocation>
</comment>
<comment type="domain">
    <text evidence="1">The J domain is necessary and sufficient to stimulate DnaK ATPase activity. Zinc center 1 plays an important role in the autonomous, DnaK-independent chaperone activity of DnaJ. Zinc center 2 is essential for interaction with DnaK and for DnaJ activity.</text>
</comment>
<comment type="similarity">
    <text evidence="1">Belongs to the DnaJ family.</text>
</comment>
<organism>
    <name type="scientific">Lactobacillus acidophilus (strain ATCC 700396 / NCK56 / N2 / NCFM)</name>
    <dbReference type="NCBI Taxonomy" id="272621"/>
    <lineage>
        <taxon>Bacteria</taxon>
        <taxon>Bacillati</taxon>
        <taxon>Bacillota</taxon>
        <taxon>Bacilli</taxon>
        <taxon>Lactobacillales</taxon>
        <taxon>Lactobacillaceae</taxon>
        <taxon>Lactobacillus</taxon>
    </lineage>
</organism>
<gene>
    <name evidence="1" type="primary">dnaJ</name>
    <name type="ordered locus">LBA1246</name>
</gene>
<name>DNAJ_LACAC</name>
<sequence>MAQEDYYKVLGVDRDASDQEISKAYRKLAKKYHPDLNHEPGAEEKYKQVNEAYEVLHDKQKRAQYDQFGSAGVNGQGGFGGAGQGFGGAGFDTSGFGDFGDIFGDIFGQGARQQRVDPTQPQRGQDLDYTLTIDFMDAINGKKTQVSYTRDETCETCGGNGCEKGTHPITCDKCHGTGVMTVTQQSMLGMIRRQTTCDKCNGRGVIIEHPCKTCGGKGTVERKNTIEVDIPAGIDNGQQLRYQGQGEAGRNGGPYGDLYISYRIKPSKDFERRGQNIYTEVPISFAQATLGDEITVKTVHGDAKLTIPAGTQPNKKFTLRGQGVPYLRGNGNGDQITTVNIVIPKHINDKQKEDLTNFVHDGGGNITPQEKGFFERLKDKLSGE</sequence>
<proteinExistence type="inferred from homology"/>
<accession>Q84BU3</accession>
<accession>Q5FJP5</accession>
<feature type="chain" id="PRO_0000070800" description="Chaperone protein DnaJ">
    <location>
        <begin position="1"/>
        <end position="384"/>
    </location>
</feature>
<feature type="domain" description="J" evidence="1">
    <location>
        <begin position="5"/>
        <end position="69"/>
    </location>
</feature>
<feature type="repeat" description="CXXCXGXG motif">
    <location>
        <begin position="154"/>
        <end position="161"/>
    </location>
</feature>
<feature type="repeat" description="CXXCXGXG motif">
    <location>
        <begin position="171"/>
        <end position="178"/>
    </location>
</feature>
<feature type="repeat" description="CXXCXGXG motif">
    <location>
        <begin position="197"/>
        <end position="204"/>
    </location>
</feature>
<feature type="repeat" description="CXXCXGXG motif">
    <location>
        <begin position="211"/>
        <end position="218"/>
    </location>
</feature>
<feature type="zinc finger region" description="CR-type" evidence="1">
    <location>
        <begin position="141"/>
        <end position="223"/>
    </location>
</feature>
<feature type="binding site" evidence="1">
    <location>
        <position position="154"/>
    </location>
    <ligand>
        <name>Zn(2+)</name>
        <dbReference type="ChEBI" id="CHEBI:29105"/>
        <label>1</label>
    </ligand>
</feature>
<feature type="binding site" evidence="1">
    <location>
        <position position="157"/>
    </location>
    <ligand>
        <name>Zn(2+)</name>
        <dbReference type="ChEBI" id="CHEBI:29105"/>
        <label>1</label>
    </ligand>
</feature>
<feature type="binding site" evidence="1">
    <location>
        <position position="171"/>
    </location>
    <ligand>
        <name>Zn(2+)</name>
        <dbReference type="ChEBI" id="CHEBI:29105"/>
        <label>2</label>
    </ligand>
</feature>
<feature type="binding site" evidence="1">
    <location>
        <position position="174"/>
    </location>
    <ligand>
        <name>Zn(2+)</name>
        <dbReference type="ChEBI" id="CHEBI:29105"/>
        <label>2</label>
    </ligand>
</feature>
<feature type="binding site" evidence="1">
    <location>
        <position position="197"/>
    </location>
    <ligand>
        <name>Zn(2+)</name>
        <dbReference type="ChEBI" id="CHEBI:29105"/>
        <label>2</label>
    </ligand>
</feature>
<feature type="binding site" evidence="1">
    <location>
        <position position="200"/>
    </location>
    <ligand>
        <name>Zn(2+)</name>
        <dbReference type="ChEBI" id="CHEBI:29105"/>
        <label>2</label>
    </ligand>
</feature>
<feature type="binding site" evidence="1">
    <location>
        <position position="211"/>
    </location>
    <ligand>
        <name>Zn(2+)</name>
        <dbReference type="ChEBI" id="CHEBI:29105"/>
        <label>1</label>
    </ligand>
</feature>
<feature type="binding site" evidence="1">
    <location>
        <position position="214"/>
    </location>
    <ligand>
        <name>Zn(2+)</name>
        <dbReference type="ChEBI" id="CHEBI:29105"/>
        <label>1</label>
    </ligand>
</feature>
<dbReference type="EMBL" id="AB059359">
    <property type="protein sequence ID" value="BAC66861.1"/>
    <property type="molecule type" value="Genomic_DNA"/>
</dbReference>
<dbReference type="EMBL" id="CP000033">
    <property type="protein sequence ID" value="AAV43079.1"/>
    <property type="molecule type" value="Genomic_DNA"/>
</dbReference>
<dbReference type="RefSeq" id="WP_003547790.1">
    <property type="nucleotide sequence ID" value="NC_006814.3"/>
</dbReference>
<dbReference type="RefSeq" id="YP_194110.1">
    <property type="nucleotide sequence ID" value="NC_006814.3"/>
</dbReference>
<dbReference type="SMR" id="Q84BU3"/>
<dbReference type="STRING" id="272621.LBA1246"/>
<dbReference type="GeneID" id="93289663"/>
<dbReference type="KEGG" id="lac:LBA1246"/>
<dbReference type="PATRIC" id="fig|272621.13.peg.1181"/>
<dbReference type="eggNOG" id="COG0484">
    <property type="taxonomic scope" value="Bacteria"/>
</dbReference>
<dbReference type="HOGENOM" id="CLU_017633_0_7_9"/>
<dbReference type="OrthoDB" id="9779889at2"/>
<dbReference type="BioCyc" id="LACI272621:G1G49-1229-MONOMER"/>
<dbReference type="Proteomes" id="UP000006381">
    <property type="component" value="Chromosome"/>
</dbReference>
<dbReference type="GO" id="GO:0005737">
    <property type="term" value="C:cytoplasm"/>
    <property type="evidence" value="ECO:0007669"/>
    <property type="project" value="UniProtKB-SubCell"/>
</dbReference>
<dbReference type="GO" id="GO:0005524">
    <property type="term" value="F:ATP binding"/>
    <property type="evidence" value="ECO:0007669"/>
    <property type="project" value="InterPro"/>
</dbReference>
<dbReference type="GO" id="GO:0031072">
    <property type="term" value="F:heat shock protein binding"/>
    <property type="evidence" value="ECO:0007669"/>
    <property type="project" value="InterPro"/>
</dbReference>
<dbReference type="GO" id="GO:0051082">
    <property type="term" value="F:unfolded protein binding"/>
    <property type="evidence" value="ECO:0007669"/>
    <property type="project" value="UniProtKB-UniRule"/>
</dbReference>
<dbReference type="GO" id="GO:0008270">
    <property type="term" value="F:zinc ion binding"/>
    <property type="evidence" value="ECO:0007669"/>
    <property type="project" value="UniProtKB-UniRule"/>
</dbReference>
<dbReference type="GO" id="GO:0051085">
    <property type="term" value="P:chaperone cofactor-dependent protein refolding"/>
    <property type="evidence" value="ECO:0007669"/>
    <property type="project" value="TreeGrafter"/>
</dbReference>
<dbReference type="GO" id="GO:0006260">
    <property type="term" value="P:DNA replication"/>
    <property type="evidence" value="ECO:0007669"/>
    <property type="project" value="UniProtKB-KW"/>
</dbReference>
<dbReference type="GO" id="GO:0042026">
    <property type="term" value="P:protein refolding"/>
    <property type="evidence" value="ECO:0007669"/>
    <property type="project" value="TreeGrafter"/>
</dbReference>
<dbReference type="GO" id="GO:0009408">
    <property type="term" value="P:response to heat"/>
    <property type="evidence" value="ECO:0007669"/>
    <property type="project" value="InterPro"/>
</dbReference>
<dbReference type="CDD" id="cd06257">
    <property type="entry name" value="DnaJ"/>
    <property type="match status" value="1"/>
</dbReference>
<dbReference type="CDD" id="cd10747">
    <property type="entry name" value="DnaJ_C"/>
    <property type="match status" value="1"/>
</dbReference>
<dbReference type="CDD" id="cd10719">
    <property type="entry name" value="DnaJ_zf"/>
    <property type="match status" value="1"/>
</dbReference>
<dbReference type="FunFam" id="2.60.260.20:FF:000005">
    <property type="entry name" value="Chaperone protein dnaJ 1, mitochondrial"/>
    <property type="match status" value="1"/>
</dbReference>
<dbReference type="FunFam" id="1.10.287.110:FF:000031">
    <property type="entry name" value="Molecular chaperone DnaJ"/>
    <property type="match status" value="1"/>
</dbReference>
<dbReference type="FunFam" id="2.10.230.10:FF:000002">
    <property type="entry name" value="Molecular chaperone DnaJ"/>
    <property type="match status" value="1"/>
</dbReference>
<dbReference type="Gene3D" id="1.10.287.110">
    <property type="entry name" value="DnaJ domain"/>
    <property type="match status" value="1"/>
</dbReference>
<dbReference type="Gene3D" id="2.10.230.10">
    <property type="entry name" value="Heat shock protein DnaJ, cysteine-rich domain"/>
    <property type="match status" value="1"/>
</dbReference>
<dbReference type="Gene3D" id="2.60.260.20">
    <property type="entry name" value="Urease metallochaperone UreE, N-terminal domain"/>
    <property type="match status" value="2"/>
</dbReference>
<dbReference type="HAMAP" id="MF_01152">
    <property type="entry name" value="DnaJ"/>
    <property type="match status" value="1"/>
</dbReference>
<dbReference type="InterPro" id="IPR012724">
    <property type="entry name" value="DnaJ"/>
</dbReference>
<dbReference type="InterPro" id="IPR002939">
    <property type="entry name" value="DnaJ_C"/>
</dbReference>
<dbReference type="InterPro" id="IPR001623">
    <property type="entry name" value="DnaJ_domain"/>
</dbReference>
<dbReference type="InterPro" id="IPR018253">
    <property type="entry name" value="DnaJ_domain_CS"/>
</dbReference>
<dbReference type="InterPro" id="IPR008971">
    <property type="entry name" value="HSP40/DnaJ_pept-bd"/>
</dbReference>
<dbReference type="InterPro" id="IPR001305">
    <property type="entry name" value="HSP_DnaJ_Cys-rich_dom"/>
</dbReference>
<dbReference type="InterPro" id="IPR036410">
    <property type="entry name" value="HSP_DnaJ_Cys-rich_dom_sf"/>
</dbReference>
<dbReference type="InterPro" id="IPR036869">
    <property type="entry name" value="J_dom_sf"/>
</dbReference>
<dbReference type="NCBIfam" id="TIGR02349">
    <property type="entry name" value="DnaJ_bact"/>
    <property type="match status" value="1"/>
</dbReference>
<dbReference type="NCBIfam" id="NF008035">
    <property type="entry name" value="PRK10767.1"/>
    <property type="match status" value="1"/>
</dbReference>
<dbReference type="NCBIfam" id="NF010869">
    <property type="entry name" value="PRK14276.1"/>
    <property type="match status" value="1"/>
</dbReference>
<dbReference type="PANTHER" id="PTHR43096:SF48">
    <property type="entry name" value="CHAPERONE PROTEIN DNAJ"/>
    <property type="match status" value="1"/>
</dbReference>
<dbReference type="PANTHER" id="PTHR43096">
    <property type="entry name" value="DNAJ HOMOLOG 1, MITOCHONDRIAL-RELATED"/>
    <property type="match status" value="1"/>
</dbReference>
<dbReference type="Pfam" id="PF00226">
    <property type="entry name" value="DnaJ"/>
    <property type="match status" value="1"/>
</dbReference>
<dbReference type="Pfam" id="PF01556">
    <property type="entry name" value="DnaJ_C"/>
    <property type="match status" value="1"/>
</dbReference>
<dbReference type="Pfam" id="PF00684">
    <property type="entry name" value="DnaJ_CXXCXGXG"/>
    <property type="match status" value="1"/>
</dbReference>
<dbReference type="PRINTS" id="PR00625">
    <property type="entry name" value="JDOMAIN"/>
</dbReference>
<dbReference type="SMART" id="SM00271">
    <property type="entry name" value="DnaJ"/>
    <property type="match status" value="1"/>
</dbReference>
<dbReference type="SUPFAM" id="SSF46565">
    <property type="entry name" value="Chaperone J-domain"/>
    <property type="match status" value="1"/>
</dbReference>
<dbReference type="SUPFAM" id="SSF57938">
    <property type="entry name" value="DnaJ/Hsp40 cysteine-rich domain"/>
    <property type="match status" value="1"/>
</dbReference>
<dbReference type="SUPFAM" id="SSF49493">
    <property type="entry name" value="HSP40/DnaJ peptide-binding domain"/>
    <property type="match status" value="2"/>
</dbReference>
<dbReference type="PROSITE" id="PS00636">
    <property type="entry name" value="DNAJ_1"/>
    <property type="match status" value="1"/>
</dbReference>
<dbReference type="PROSITE" id="PS50076">
    <property type="entry name" value="DNAJ_2"/>
    <property type="match status" value="1"/>
</dbReference>
<dbReference type="PROSITE" id="PS51188">
    <property type="entry name" value="ZF_CR"/>
    <property type="match status" value="1"/>
</dbReference>
<reference key="1">
    <citation type="submission" date="2001-04" db="EMBL/GenBank/DDBJ databases">
        <title>Characterization of Lactobacillus acidophilus dnaK.</title>
        <authorList>
            <person name="Aoyama K."/>
            <person name="Uenishi H."/>
            <person name="Nakajima H."/>
        </authorList>
    </citation>
    <scope>NUCLEOTIDE SEQUENCE [GENOMIC DNA]</scope>
    <source>
        <strain>SBT2062</strain>
    </source>
</reference>
<reference key="2">
    <citation type="journal article" date="2005" name="Proc. Natl. Acad. Sci. U.S.A.">
        <title>Complete genome sequence of the probiotic lactic acid bacterium Lactobacillus acidophilus NCFM.</title>
        <authorList>
            <person name="Altermann E."/>
            <person name="Russell W.M."/>
            <person name="Azcarate-Peril M.A."/>
            <person name="Barrangou R."/>
            <person name="Buck B.L."/>
            <person name="McAuliffe O."/>
            <person name="Souther N."/>
            <person name="Dobson A."/>
            <person name="Duong T."/>
            <person name="Callanan M."/>
            <person name="Lick S."/>
            <person name="Hamrick A."/>
            <person name="Cano R."/>
            <person name="Klaenhammer T.R."/>
        </authorList>
    </citation>
    <scope>NUCLEOTIDE SEQUENCE [LARGE SCALE GENOMIC DNA]</scope>
    <source>
        <strain>ATCC 700396 / NCK56 / N2 / NCFM</strain>
    </source>
</reference>
<keyword id="KW-0143">Chaperone</keyword>
<keyword id="KW-0963">Cytoplasm</keyword>
<keyword id="KW-0235">DNA replication</keyword>
<keyword id="KW-0479">Metal-binding</keyword>
<keyword id="KW-1185">Reference proteome</keyword>
<keyword id="KW-0677">Repeat</keyword>
<keyword id="KW-0346">Stress response</keyword>
<keyword id="KW-0862">Zinc</keyword>
<keyword id="KW-0863">Zinc-finger</keyword>